<name>PPR37_ARATH</name>
<proteinExistence type="evidence at transcript level"/>
<feature type="chain" id="PRO_0000342778" description="Pentatricopeptide repeat-containing protein At1g12620">
    <location>
        <begin position="1"/>
        <end position="621"/>
    </location>
</feature>
<feature type="repeat" description="PPR 1">
    <location>
        <begin position="36"/>
        <end position="70"/>
    </location>
</feature>
<feature type="repeat" description="PPR 2">
    <location>
        <begin position="71"/>
        <end position="105"/>
    </location>
</feature>
<feature type="repeat" description="PPR 3">
    <location>
        <begin position="106"/>
        <end position="140"/>
    </location>
</feature>
<feature type="repeat" description="PPR 4">
    <location>
        <begin position="141"/>
        <end position="175"/>
    </location>
</feature>
<feature type="repeat" description="PPR 5">
    <location>
        <begin position="176"/>
        <end position="210"/>
    </location>
</feature>
<feature type="repeat" description="PPR 6">
    <location>
        <begin position="211"/>
        <end position="245"/>
    </location>
</feature>
<feature type="repeat" description="PPR 7">
    <location>
        <begin position="246"/>
        <end position="280"/>
    </location>
</feature>
<feature type="repeat" description="PPR 8">
    <location>
        <begin position="281"/>
        <end position="315"/>
    </location>
</feature>
<feature type="repeat" description="PPR 9">
    <location>
        <begin position="316"/>
        <end position="350"/>
    </location>
</feature>
<feature type="repeat" description="PPR 10">
    <location>
        <begin position="351"/>
        <end position="385"/>
    </location>
</feature>
<feature type="repeat" description="PPR 11">
    <location>
        <begin position="386"/>
        <end position="420"/>
    </location>
</feature>
<feature type="repeat" description="PPR 12">
    <location>
        <begin position="421"/>
        <end position="455"/>
    </location>
</feature>
<feature type="repeat" description="PPR 13">
    <location>
        <begin position="456"/>
        <end position="490"/>
    </location>
</feature>
<feature type="repeat" description="PPR 14">
    <location>
        <begin position="491"/>
        <end position="525"/>
    </location>
</feature>
<feature type="repeat" description="PPR 15">
    <location>
        <begin position="526"/>
        <end position="560"/>
    </location>
</feature>
<feature type="repeat" description="PPR 16">
    <location>
        <begin position="561"/>
        <end position="595"/>
    </location>
</feature>
<comment type="similarity">
    <text evidence="1">Belongs to the PPR family. P subfamily.</text>
</comment>
<comment type="sequence caution" evidence="1">
    <conflict type="erroneous gene model prediction">
        <sequence resource="EMBL-CDS" id="AAF88095"/>
    </conflict>
</comment>
<comment type="online information" name="Pentatricopeptide repeat proteins">
    <link uri="https://ppr.plantenergy.uwa.edu.au"/>
</comment>
<sequence>MRGLIQTRLLETGTLRTALFLSCYGRVFSSVSDGKGKVSYRERLRSGIVDIKEDDAVDLFQEMTRSRPRPRLIDFSRLFSVVARTKQYDLVLDLCKQMELKGIAHNLYTLSIMINCCCRCRKLSLAFSAMGKIIKLGYEPDTVTFSTLINGLCLEGRVSEALELVDRMVEMGHKPTLITLNALVNGLCLNGKVSDAVLLIDRMVETGFQPNEVTYGPVLKVMCKSGQTALAMELLRKMEERKIKLDAVKYSIIIDGLCKDGSLDNAFNLFNEMEIKGFKADIIIYTTLIRGFCYAGRWDDGAKLLRDMIKRKITPDVVAFSALIDCFVKEGKLREAEELHKEMIQRGISPDTVTYTSLIDGFCKENQLDKANHMLDLMVSKGCGPNIRTFNILINGYCKANLIDDGLELFRKMSLRGVVADTVTYNTLIQGFCELGKLEVAKELFQEMVSRRVRPDIVSYKILLDGLCDNGEPEKALEIFEKIEKSKMELDIGIYNIIIHGMCNASKVDDAWDLFCSLPLKGVKPDVKTYNIMIGGLCKKGSLSEADLLFRKMEEDGHSPNGCTYNILIRAHLGEGDATKSAKLIEEIKRCGFSVDASTVKMVVDMLSDGRLKKSFLDMLS</sequence>
<protein>
    <recommendedName>
        <fullName>Pentatricopeptide repeat-containing protein At1g12620</fullName>
    </recommendedName>
</protein>
<organism>
    <name type="scientific">Arabidopsis thaliana</name>
    <name type="common">Mouse-ear cress</name>
    <dbReference type="NCBI Taxonomy" id="3702"/>
    <lineage>
        <taxon>Eukaryota</taxon>
        <taxon>Viridiplantae</taxon>
        <taxon>Streptophyta</taxon>
        <taxon>Embryophyta</taxon>
        <taxon>Tracheophyta</taxon>
        <taxon>Spermatophyta</taxon>
        <taxon>Magnoliopsida</taxon>
        <taxon>eudicotyledons</taxon>
        <taxon>Gunneridae</taxon>
        <taxon>Pentapetalae</taxon>
        <taxon>rosids</taxon>
        <taxon>malvids</taxon>
        <taxon>Brassicales</taxon>
        <taxon>Brassicaceae</taxon>
        <taxon>Camelineae</taxon>
        <taxon>Arabidopsis</taxon>
    </lineage>
</organism>
<reference key="1">
    <citation type="journal article" date="2000" name="Nature">
        <title>Sequence and analysis of chromosome 1 of the plant Arabidopsis thaliana.</title>
        <authorList>
            <person name="Theologis A."/>
            <person name="Ecker J.R."/>
            <person name="Palm C.J."/>
            <person name="Federspiel N.A."/>
            <person name="Kaul S."/>
            <person name="White O."/>
            <person name="Alonso J."/>
            <person name="Altafi H."/>
            <person name="Araujo R."/>
            <person name="Bowman C.L."/>
            <person name="Brooks S.Y."/>
            <person name="Buehler E."/>
            <person name="Chan A."/>
            <person name="Chao Q."/>
            <person name="Chen H."/>
            <person name="Cheuk R.F."/>
            <person name="Chin C.W."/>
            <person name="Chung M.K."/>
            <person name="Conn L."/>
            <person name="Conway A.B."/>
            <person name="Conway A.R."/>
            <person name="Creasy T.H."/>
            <person name="Dewar K."/>
            <person name="Dunn P."/>
            <person name="Etgu P."/>
            <person name="Feldblyum T.V."/>
            <person name="Feng J.-D."/>
            <person name="Fong B."/>
            <person name="Fujii C.Y."/>
            <person name="Gill J.E."/>
            <person name="Goldsmith A.D."/>
            <person name="Haas B."/>
            <person name="Hansen N.F."/>
            <person name="Hughes B."/>
            <person name="Huizar L."/>
            <person name="Hunter J.L."/>
            <person name="Jenkins J."/>
            <person name="Johnson-Hopson C."/>
            <person name="Khan S."/>
            <person name="Khaykin E."/>
            <person name="Kim C.J."/>
            <person name="Koo H.L."/>
            <person name="Kremenetskaia I."/>
            <person name="Kurtz D.B."/>
            <person name="Kwan A."/>
            <person name="Lam B."/>
            <person name="Langin-Hooper S."/>
            <person name="Lee A."/>
            <person name="Lee J.M."/>
            <person name="Lenz C.A."/>
            <person name="Li J.H."/>
            <person name="Li Y.-P."/>
            <person name="Lin X."/>
            <person name="Liu S.X."/>
            <person name="Liu Z.A."/>
            <person name="Luros J.S."/>
            <person name="Maiti R."/>
            <person name="Marziali A."/>
            <person name="Militscher J."/>
            <person name="Miranda M."/>
            <person name="Nguyen M."/>
            <person name="Nierman W.C."/>
            <person name="Osborne B.I."/>
            <person name="Pai G."/>
            <person name="Peterson J."/>
            <person name="Pham P.K."/>
            <person name="Rizzo M."/>
            <person name="Rooney T."/>
            <person name="Rowley D."/>
            <person name="Sakano H."/>
            <person name="Salzberg S.L."/>
            <person name="Schwartz J.R."/>
            <person name="Shinn P."/>
            <person name="Southwick A.M."/>
            <person name="Sun H."/>
            <person name="Tallon L.J."/>
            <person name="Tambunga G."/>
            <person name="Toriumi M.J."/>
            <person name="Town C.D."/>
            <person name="Utterback T."/>
            <person name="Van Aken S."/>
            <person name="Vaysberg M."/>
            <person name="Vysotskaia V.S."/>
            <person name="Walker M."/>
            <person name="Wu D."/>
            <person name="Yu G."/>
            <person name="Fraser C.M."/>
            <person name="Venter J.C."/>
            <person name="Davis R.W."/>
        </authorList>
    </citation>
    <scope>NUCLEOTIDE SEQUENCE [LARGE SCALE GENOMIC DNA]</scope>
    <source>
        <strain>cv. Columbia</strain>
    </source>
</reference>
<reference key="2">
    <citation type="journal article" date="2017" name="Plant J.">
        <title>Araport11: a complete reannotation of the Arabidopsis thaliana reference genome.</title>
        <authorList>
            <person name="Cheng C.Y."/>
            <person name="Krishnakumar V."/>
            <person name="Chan A.P."/>
            <person name="Thibaud-Nissen F."/>
            <person name="Schobel S."/>
            <person name="Town C.D."/>
        </authorList>
    </citation>
    <scope>GENOME REANNOTATION</scope>
    <source>
        <strain>cv. Columbia</strain>
    </source>
</reference>
<reference key="3">
    <citation type="journal article" date="2003" name="Science">
        <title>Empirical analysis of transcriptional activity in the Arabidopsis genome.</title>
        <authorList>
            <person name="Yamada K."/>
            <person name="Lim J."/>
            <person name="Dale J.M."/>
            <person name="Chen H."/>
            <person name="Shinn P."/>
            <person name="Palm C.J."/>
            <person name="Southwick A.M."/>
            <person name="Wu H.C."/>
            <person name="Kim C.J."/>
            <person name="Nguyen M."/>
            <person name="Pham P.K."/>
            <person name="Cheuk R.F."/>
            <person name="Karlin-Newmann G."/>
            <person name="Liu S.X."/>
            <person name="Lam B."/>
            <person name="Sakano H."/>
            <person name="Wu T."/>
            <person name="Yu G."/>
            <person name="Miranda M."/>
            <person name="Quach H.L."/>
            <person name="Tripp M."/>
            <person name="Chang C.H."/>
            <person name="Lee J.M."/>
            <person name="Toriumi M.J."/>
            <person name="Chan M.M."/>
            <person name="Tang C.C."/>
            <person name="Onodera C.S."/>
            <person name="Deng J.M."/>
            <person name="Akiyama K."/>
            <person name="Ansari Y."/>
            <person name="Arakawa T."/>
            <person name="Banh J."/>
            <person name="Banno F."/>
            <person name="Bowser L."/>
            <person name="Brooks S.Y."/>
            <person name="Carninci P."/>
            <person name="Chao Q."/>
            <person name="Choy N."/>
            <person name="Enju A."/>
            <person name="Goldsmith A.D."/>
            <person name="Gurjal M."/>
            <person name="Hansen N.F."/>
            <person name="Hayashizaki Y."/>
            <person name="Johnson-Hopson C."/>
            <person name="Hsuan V.W."/>
            <person name="Iida K."/>
            <person name="Karnes M."/>
            <person name="Khan S."/>
            <person name="Koesema E."/>
            <person name="Ishida J."/>
            <person name="Jiang P.X."/>
            <person name="Jones T."/>
            <person name="Kawai J."/>
            <person name="Kamiya A."/>
            <person name="Meyers C."/>
            <person name="Nakajima M."/>
            <person name="Narusaka M."/>
            <person name="Seki M."/>
            <person name="Sakurai T."/>
            <person name="Satou M."/>
            <person name="Tamse R."/>
            <person name="Vaysberg M."/>
            <person name="Wallender E.K."/>
            <person name="Wong C."/>
            <person name="Yamamura Y."/>
            <person name="Yuan S."/>
            <person name="Shinozaki K."/>
            <person name="Davis R.W."/>
            <person name="Theologis A."/>
            <person name="Ecker J.R."/>
        </authorList>
    </citation>
    <scope>NUCLEOTIDE SEQUENCE [LARGE SCALE MRNA]</scope>
    <source>
        <strain>cv. Columbia</strain>
    </source>
</reference>
<reference key="4">
    <citation type="journal article" date="2004" name="Plant Cell">
        <title>Genome-wide analysis of Arabidopsis pentatricopeptide repeat proteins reveals their essential role in organelle biogenesis.</title>
        <authorList>
            <person name="Lurin C."/>
            <person name="Andres C."/>
            <person name="Aubourg S."/>
            <person name="Bellaoui M."/>
            <person name="Bitton F."/>
            <person name="Bruyere C."/>
            <person name="Caboche M."/>
            <person name="Debast C."/>
            <person name="Gualberto J."/>
            <person name="Hoffmann B."/>
            <person name="Lecharny A."/>
            <person name="Le Ret M."/>
            <person name="Martin-Magniette M.-L."/>
            <person name="Mireau H."/>
            <person name="Peeters N."/>
            <person name="Renou J.-P."/>
            <person name="Szurek B."/>
            <person name="Taconnat L."/>
            <person name="Small I."/>
        </authorList>
    </citation>
    <scope>GENE FAMILY</scope>
</reference>
<dbReference type="EMBL" id="AC025417">
    <property type="protein sequence ID" value="AAF88095.1"/>
    <property type="status" value="ALT_SEQ"/>
    <property type="molecule type" value="Genomic_DNA"/>
</dbReference>
<dbReference type="EMBL" id="CP002684">
    <property type="protein sequence ID" value="AEE28902.1"/>
    <property type="molecule type" value="Genomic_DNA"/>
</dbReference>
<dbReference type="EMBL" id="AF361578">
    <property type="protein sequence ID" value="AAK32746.1"/>
    <property type="molecule type" value="mRNA"/>
</dbReference>
<dbReference type="EMBL" id="BT001023">
    <property type="protein sequence ID" value="AAN46777.1"/>
    <property type="molecule type" value="mRNA"/>
</dbReference>
<dbReference type="RefSeq" id="NP_563911.1">
    <property type="nucleotide sequence ID" value="NM_101132.2"/>
</dbReference>
<dbReference type="SMR" id="Q9ASZ8"/>
<dbReference type="BioGRID" id="23058">
    <property type="interactions" value="1"/>
</dbReference>
<dbReference type="FunCoup" id="Q9ASZ8">
    <property type="interactions" value="269"/>
</dbReference>
<dbReference type="IntAct" id="Q9ASZ8">
    <property type="interactions" value="1"/>
</dbReference>
<dbReference type="STRING" id="3702.Q9ASZ8"/>
<dbReference type="PaxDb" id="3702-AT1G12620.1"/>
<dbReference type="ProteomicsDB" id="234858"/>
<dbReference type="EnsemblPlants" id="AT1G12620.1">
    <property type="protein sequence ID" value="AT1G12620.1"/>
    <property type="gene ID" value="AT1G12620"/>
</dbReference>
<dbReference type="GeneID" id="837818"/>
<dbReference type="Gramene" id="AT1G12620.1">
    <property type="protein sequence ID" value="AT1G12620.1"/>
    <property type="gene ID" value="AT1G12620"/>
</dbReference>
<dbReference type="KEGG" id="ath:AT1G12620"/>
<dbReference type="Araport" id="AT1G12620"/>
<dbReference type="TAIR" id="AT1G12620"/>
<dbReference type="eggNOG" id="KOG4197">
    <property type="taxonomic scope" value="Eukaryota"/>
</dbReference>
<dbReference type="HOGENOM" id="CLU_002706_49_12_1"/>
<dbReference type="InParanoid" id="Q9ASZ8"/>
<dbReference type="OMA" id="CNARRWD"/>
<dbReference type="PhylomeDB" id="Q9ASZ8"/>
<dbReference type="PRO" id="PR:Q9ASZ8"/>
<dbReference type="Proteomes" id="UP000006548">
    <property type="component" value="Chromosome 1"/>
</dbReference>
<dbReference type="ExpressionAtlas" id="Q9ASZ8">
    <property type="expression patterns" value="baseline and differential"/>
</dbReference>
<dbReference type="GO" id="GO:0005739">
    <property type="term" value="C:mitochondrion"/>
    <property type="evidence" value="ECO:0000314"/>
    <property type="project" value="TAIR"/>
</dbReference>
<dbReference type="GO" id="GO:0000966">
    <property type="term" value="P:RNA 5'-end processing"/>
    <property type="evidence" value="ECO:0000270"/>
    <property type="project" value="TAIR"/>
</dbReference>
<dbReference type="FunFam" id="1.25.40.10:FF:003431">
    <property type="entry name" value="Pentatricopeptide repeat-containing protein At1g62670, mitochondrial"/>
    <property type="match status" value="1"/>
</dbReference>
<dbReference type="FunFam" id="1.25.40.10:FF:000558">
    <property type="entry name" value="Pentatricopeptide repeat-containing protein At5g39710"/>
    <property type="match status" value="1"/>
</dbReference>
<dbReference type="Gene3D" id="1.25.40.10">
    <property type="entry name" value="Tetratricopeptide repeat domain"/>
    <property type="match status" value="5"/>
</dbReference>
<dbReference type="InterPro" id="IPR002885">
    <property type="entry name" value="Pentatricopeptide_rpt"/>
</dbReference>
<dbReference type="InterPro" id="IPR011990">
    <property type="entry name" value="TPR-like_helical_dom_sf"/>
</dbReference>
<dbReference type="NCBIfam" id="TIGR00756">
    <property type="entry name" value="PPR"/>
    <property type="match status" value="14"/>
</dbReference>
<dbReference type="PANTHER" id="PTHR47941">
    <property type="entry name" value="PENTATRICOPEPTIDE REPEAT-CONTAINING PROTEIN 3, MITOCHONDRIAL"/>
    <property type="match status" value="1"/>
</dbReference>
<dbReference type="Pfam" id="PF01535">
    <property type="entry name" value="PPR"/>
    <property type="match status" value="2"/>
</dbReference>
<dbReference type="Pfam" id="PF12854">
    <property type="entry name" value="PPR_1"/>
    <property type="match status" value="3"/>
</dbReference>
<dbReference type="Pfam" id="PF13041">
    <property type="entry name" value="PPR_2"/>
    <property type="match status" value="4"/>
</dbReference>
<dbReference type="Pfam" id="PF13812">
    <property type="entry name" value="PPR_3"/>
    <property type="match status" value="1"/>
</dbReference>
<dbReference type="SUPFAM" id="SSF81901">
    <property type="entry name" value="HCP-like"/>
    <property type="match status" value="1"/>
</dbReference>
<dbReference type="PROSITE" id="PS51375">
    <property type="entry name" value="PPR"/>
    <property type="match status" value="16"/>
</dbReference>
<evidence type="ECO:0000305" key="1"/>
<gene>
    <name type="ordered locus">At1g12620</name>
    <name type="ORF">T12C24.15</name>
</gene>
<keyword id="KW-1185">Reference proteome</keyword>
<keyword id="KW-0677">Repeat</keyword>
<accession>Q9ASZ8</accession>
<accession>Q9LN85</accession>